<sequence length="81" mass="9374">MAYHGLTVPLIVMSVFWGFVGFLVPWFIPKGPNRGVIITMLVTCSVCCYLFWLIAILAQLNPLFGPQLKNETIWYLKYHWP</sequence>
<gene>
    <name type="primary">ATP6V0E1</name>
    <name type="synonym">ATP6V0E</name>
</gene>
<reference key="1">
    <citation type="submission" date="2004-11" db="EMBL/GenBank/DDBJ databases">
        <authorList>
            <consortium name="The German cDNA consortium"/>
        </authorList>
    </citation>
    <scope>NUCLEOTIDE SEQUENCE [LARGE SCALE MRNA]</scope>
    <source>
        <tissue>Heart</tissue>
    </source>
</reference>
<dbReference type="EMBL" id="CR858912">
    <property type="protein sequence ID" value="CAH91110.1"/>
    <property type="molecule type" value="mRNA"/>
</dbReference>
<dbReference type="RefSeq" id="NP_001125649.1">
    <property type="nucleotide sequence ID" value="NM_001132177.2"/>
</dbReference>
<dbReference type="SMR" id="Q5RAV0"/>
<dbReference type="FunCoup" id="Q5RAV0">
    <property type="interactions" value="653"/>
</dbReference>
<dbReference type="STRING" id="9601.ENSPPYP00000023723"/>
<dbReference type="GlyCosmos" id="Q5RAV0">
    <property type="glycosylation" value="1 site, No reported glycans"/>
</dbReference>
<dbReference type="Ensembl" id="ENSPPYT00000058464.1">
    <property type="protein sequence ID" value="ENSPPYP00000043951.1"/>
    <property type="gene ID" value="ENSPPYG00000039284.1"/>
</dbReference>
<dbReference type="GeneID" id="100172568"/>
<dbReference type="KEGG" id="pon:100172568"/>
<dbReference type="CTD" id="8992"/>
<dbReference type="eggNOG" id="KOG3500">
    <property type="taxonomic scope" value="Eukaryota"/>
</dbReference>
<dbReference type="GeneTree" id="ENSGT00940000156866"/>
<dbReference type="HOGENOM" id="CLU_170555_0_1_1"/>
<dbReference type="InParanoid" id="Q5RAV0"/>
<dbReference type="OMA" id="TDAIWYL"/>
<dbReference type="OrthoDB" id="1508846at2759"/>
<dbReference type="TreeFam" id="TF300290"/>
<dbReference type="Proteomes" id="UP000001595">
    <property type="component" value="Chromosome 5"/>
</dbReference>
<dbReference type="GO" id="GO:0033179">
    <property type="term" value="C:proton-transporting V-type ATPase, V0 domain"/>
    <property type="evidence" value="ECO:0007669"/>
    <property type="project" value="InterPro"/>
</dbReference>
<dbReference type="GO" id="GO:0046961">
    <property type="term" value="F:proton-transporting ATPase activity, rotational mechanism"/>
    <property type="evidence" value="ECO:0007669"/>
    <property type="project" value="Ensembl"/>
</dbReference>
<dbReference type="InterPro" id="IPR008389">
    <property type="entry name" value="ATPase_V0-cplx_e1/e2_su"/>
</dbReference>
<dbReference type="InterPro" id="IPR017385">
    <property type="entry name" value="ATPase_V0-cplx_e1/e2_su_met"/>
</dbReference>
<dbReference type="PANTHER" id="PTHR12263:SF5">
    <property type="entry name" value="V-TYPE PROTON ATPASE SUBUNIT E 1"/>
    <property type="match status" value="1"/>
</dbReference>
<dbReference type="PANTHER" id="PTHR12263">
    <property type="entry name" value="VACUOLAR ATP SYNTHASE SUBUNIT H"/>
    <property type="match status" value="1"/>
</dbReference>
<dbReference type="Pfam" id="PF05493">
    <property type="entry name" value="ATP_synt_H"/>
    <property type="match status" value="1"/>
</dbReference>
<dbReference type="PIRSF" id="PIRSF038097">
    <property type="entry name" value="V-ATP_synth_e1/e2"/>
    <property type="match status" value="1"/>
</dbReference>
<organism>
    <name type="scientific">Pongo abelii</name>
    <name type="common">Sumatran orangutan</name>
    <name type="synonym">Pongo pygmaeus abelii</name>
    <dbReference type="NCBI Taxonomy" id="9601"/>
    <lineage>
        <taxon>Eukaryota</taxon>
        <taxon>Metazoa</taxon>
        <taxon>Chordata</taxon>
        <taxon>Craniata</taxon>
        <taxon>Vertebrata</taxon>
        <taxon>Euteleostomi</taxon>
        <taxon>Mammalia</taxon>
        <taxon>Eutheria</taxon>
        <taxon>Euarchontoglires</taxon>
        <taxon>Primates</taxon>
        <taxon>Haplorrhini</taxon>
        <taxon>Catarrhini</taxon>
        <taxon>Hominidae</taxon>
        <taxon>Pongo</taxon>
    </lineage>
</organism>
<comment type="function">
    <text evidence="1 2">Subunit of the V0 complex of vacuolar(H+)-ATPase (V-ATPase), a multisubunit enzyme composed of a peripheral complex (V1) that hydrolyzes ATP and a membrane integral complex (V0) that translocates protons (By similarity). V-ATPase is responsible for acidifying and maintaining the pH of intracellular compartments and in some cell types, is targeted to the plasma membrane, where it is responsible for acidifying the extracellular environment (By similarity).</text>
</comment>
<comment type="subunit">
    <text evidence="1">V-ATPase is a heteromultimeric enzyme made up of two complexes: the ATP-hydrolytic V1 complex and the proton translocation V0 complex (By similarity). The V1 complex consists of three catalytic AB heterodimers that form a heterohexamer, three peripheral stalks each consisting of EG heterodimers, one central rotor including subunits D and F, and the regulatory subunits C and H (By similarity). The proton translocation complex V0 consists of the proton transport subunit a, a ring of proteolipid subunits c9c'', rotary subunit d, subunits e and f, and the accessory subunits ATP6AP1/Ac45 and ATP6AP2/PRR (By similarity).</text>
</comment>
<comment type="subcellular location">
    <subcellularLocation>
        <location evidence="3">Membrane</location>
        <topology evidence="3">Multi-pass membrane protein</topology>
    </subcellularLocation>
</comment>
<comment type="similarity">
    <text evidence="4">Belongs to the V-ATPase e1/e2 subunit family.</text>
</comment>
<protein>
    <recommendedName>
        <fullName>V-type proton ATPase subunit e 1</fullName>
        <shortName>V-ATPase subunit e 1</shortName>
    </recommendedName>
    <alternativeName>
        <fullName>Vacuolar proton pump subunit e 1</fullName>
    </alternativeName>
</protein>
<name>VA0E1_PONAB</name>
<proteinExistence type="inferred from homology"/>
<accession>Q5RAV0</accession>
<evidence type="ECO:0000250" key="1">
    <source>
        <dbReference type="UniProtKB" id="O15342"/>
    </source>
</evidence>
<evidence type="ECO:0000250" key="2">
    <source>
        <dbReference type="UniProtKB" id="Q2KIB5"/>
    </source>
</evidence>
<evidence type="ECO:0000255" key="3"/>
<evidence type="ECO:0000305" key="4"/>
<feature type="chain" id="PRO_0000271224" description="V-type proton ATPase subunit e 1">
    <location>
        <begin position="1"/>
        <end position="81"/>
    </location>
</feature>
<feature type="topological domain" description="Lumenal" evidence="4">
    <location>
        <begin position="1"/>
        <end position="7"/>
    </location>
</feature>
<feature type="transmembrane region" description="Helical" evidence="3">
    <location>
        <begin position="8"/>
        <end position="28"/>
    </location>
</feature>
<feature type="topological domain" description="Cytoplasmic" evidence="4">
    <location>
        <begin position="29"/>
        <end position="35"/>
    </location>
</feature>
<feature type="transmembrane region" description="Helical" evidence="3">
    <location>
        <begin position="36"/>
        <end position="56"/>
    </location>
</feature>
<feature type="topological domain" description="Lumenal" evidence="4">
    <location>
        <begin position="57"/>
        <end position="81"/>
    </location>
</feature>
<feature type="glycosylation site" description="N-linked (GlcNAc...) asparagine" evidence="3">
    <location>
        <position position="70"/>
    </location>
</feature>
<keyword id="KW-0325">Glycoprotein</keyword>
<keyword id="KW-0375">Hydrogen ion transport</keyword>
<keyword id="KW-0406">Ion transport</keyword>
<keyword id="KW-0472">Membrane</keyword>
<keyword id="KW-1185">Reference proteome</keyword>
<keyword id="KW-0812">Transmembrane</keyword>
<keyword id="KW-1133">Transmembrane helix</keyword>
<keyword id="KW-0813">Transport</keyword>